<feature type="chain" id="PRO_1000116729" description="Elongation factor Ts">
    <location>
        <begin position="1"/>
        <end position="283"/>
    </location>
</feature>
<feature type="region of interest" description="Involved in Mg(2+) ion dislocation from EF-Tu" evidence="1">
    <location>
        <begin position="80"/>
        <end position="83"/>
    </location>
</feature>
<organism>
    <name type="scientific">Escherichia coli O157:H7 (strain EC4115 / EHEC)</name>
    <dbReference type="NCBI Taxonomy" id="444450"/>
    <lineage>
        <taxon>Bacteria</taxon>
        <taxon>Pseudomonadati</taxon>
        <taxon>Pseudomonadota</taxon>
        <taxon>Gammaproteobacteria</taxon>
        <taxon>Enterobacterales</taxon>
        <taxon>Enterobacteriaceae</taxon>
        <taxon>Escherichia</taxon>
    </lineage>
</organism>
<reference key="1">
    <citation type="journal article" date="2011" name="Proc. Natl. Acad. Sci. U.S.A.">
        <title>Genomic anatomy of Escherichia coli O157:H7 outbreaks.</title>
        <authorList>
            <person name="Eppinger M."/>
            <person name="Mammel M.K."/>
            <person name="Leclerc J.E."/>
            <person name="Ravel J."/>
            <person name="Cebula T.A."/>
        </authorList>
    </citation>
    <scope>NUCLEOTIDE SEQUENCE [LARGE SCALE GENOMIC DNA]</scope>
    <source>
        <strain>EC4115 / EHEC</strain>
    </source>
</reference>
<name>EFTS_ECO5E</name>
<gene>
    <name evidence="1" type="primary">tsf</name>
    <name type="ordered locus">ECH74115_0180</name>
</gene>
<evidence type="ECO:0000255" key="1">
    <source>
        <dbReference type="HAMAP-Rule" id="MF_00050"/>
    </source>
</evidence>
<dbReference type="EMBL" id="CP001164">
    <property type="protein sequence ID" value="ACI38125.1"/>
    <property type="molecule type" value="Genomic_DNA"/>
</dbReference>
<dbReference type="RefSeq" id="WP_000818114.1">
    <property type="nucleotide sequence ID" value="NC_011353.1"/>
</dbReference>
<dbReference type="SMR" id="B5Z0E9"/>
<dbReference type="GeneID" id="93777255"/>
<dbReference type="KEGG" id="ecf:ECH74115_0180"/>
<dbReference type="HOGENOM" id="CLU_047155_0_2_6"/>
<dbReference type="GO" id="GO:0005737">
    <property type="term" value="C:cytoplasm"/>
    <property type="evidence" value="ECO:0007669"/>
    <property type="project" value="UniProtKB-SubCell"/>
</dbReference>
<dbReference type="GO" id="GO:0003746">
    <property type="term" value="F:translation elongation factor activity"/>
    <property type="evidence" value="ECO:0007669"/>
    <property type="project" value="UniProtKB-UniRule"/>
</dbReference>
<dbReference type="CDD" id="cd14275">
    <property type="entry name" value="UBA_EF-Ts"/>
    <property type="match status" value="1"/>
</dbReference>
<dbReference type="FunFam" id="1.10.286.20:FF:000001">
    <property type="entry name" value="Elongation factor Ts"/>
    <property type="match status" value="1"/>
</dbReference>
<dbReference type="FunFam" id="1.10.8.10:FF:000001">
    <property type="entry name" value="Elongation factor Ts"/>
    <property type="match status" value="1"/>
</dbReference>
<dbReference type="FunFam" id="3.30.479.20:FF:000001">
    <property type="entry name" value="Elongation factor Ts"/>
    <property type="match status" value="1"/>
</dbReference>
<dbReference type="Gene3D" id="1.10.286.20">
    <property type="match status" value="1"/>
</dbReference>
<dbReference type="Gene3D" id="1.10.8.10">
    <property type="entry name" value="DNA helicase RuvA subunit, C-terminal domain"/>
    <property type="match status" value="1"/>
</dbReference>
<dbReference type="Gene3D" id="3.30.479.20">
    <property type="entry name" value="Elongation factor Ts, dimerisation domain"/>
    <property type="match status" value="2"/>
</dbReference>
<dbReference type="HAMAP" id="MF_00050">
    <property type="entry name" value="EF_Ts"/>
    <property type="match status" value="1"/>
</dbReference>
<dbReference type="InterPro" id="IPR036402">
    <property type="entry name" value="EF-Ts_dimer_sf"/>
</dbReference>
<dbReference type="InterPro" id="IPR001816">
    <property type="entry name" value="Transl_elong_EFTs/EF1B"/>
</dbReference>
<dbReference type="InterPro" id="IPR014039">
    <property type="entry name" value="Transl_elong_EFTs/EF1B_dimer"/>
</dbReference>
<dbReference type="InterPro" id="IPR018101">
    <property type="entry name" value="Transl_elong_Ts_CS"/>
</dbReference>
<dbReference type="InterPro" id="IPR009060">
    <property type="entry name" value="UBA-like_sf"/>
</dbReference>
<dbReference type="NCBIfam" id="TIGR00116">
    <property type="entry name" value="tsf"/>
    <property type="match status" value="1"/>
</dbReference>
<dbReference type="PANTHER" id="PTHR11741">
    <property type="entry name" value="ELONGATION FACTOR TS"/>
    <property type="match status" value="1"/>
</dbReference>
<dbReference type="PANTHER" id="PTHR11741:SF0">
    <property type="entry name" value="ELONGATION FACTOR TS, MITOCHONDRIAL"/>
    <property type="match status" value="1"/>
</dbReference>
<dbReference type="Pfam" id="PF00889">
    <property type="entry name" value="EF_TS"/>
    <property type="match status" value="1"/>
</dbReference>
<dbReference type="SUPFAM" id="SSF54713">
    <property type="entry name" value="Elongation factor Ts (EF-Ts), dimerisation domain"/>
    <property type="match status" value="2"/>
</dbReference>
<dbReference type="SUPFAM" id="SSF46934">
    <property type="entry name" value="UBA-like"/>
    <property type="match status" value="1"/>
</dbReference>
<dbReference type="PROSITE" id="PS01126">
    <property type="entry name" value="EF_TS_1"/>
    <property type="match status" value="1"/>
</dbReference>
<dbReference type="PROSITE" id="PS01127">
    <property type="entry name" value="EF_TS_2"/>
    <property type="match status" value="1"/>
</dbReference>
<comment type="function">
    <text evidence="1">Associates with the EF-Tu.GDP complex and induces the exchange of GDP to GTP. It remains bound to the aminoacyl-tRNA.EF-Tu.GTP complex up to the GTP hydrolysis stage on the ribosome.</text>
</comment>
<comment type="subcellular location">
    <subcellularLocation>
        <location evidence="1">Cytoplasm</location>
    </subcellularLocation>
</comment>
<comment type="similarity">
    <text evidence="1">Belongs to the EF-Ts family.</text>
</comment>
<proteinExistence type="inferred from homology"/>
<sequence>MAEITASLVKELRERTGAGMMDCKKALTEANGDIELAIENMRKSGAIKAAKKAGNVAADGVIKTKIDGNYGIILEVNCQTDFVAKDAGFQAFADKVLDAAVAGKITDVEVLKAQFEEERVALVAKIGENINIRRVAALEGDVLGSYQHGARIGVLVAAKGADEELVKHIAMHVAASKPEFIKPEDVSAEVVEKEYQVQLDIAMQSGKPKEIAEKMVEGRMKKFTGEVSLTGQPFVMEPSKTVGQLLKEHNAEVTGFIRFEVGEGIEKVETDFAAEVAAMSKQS</sequence>
<keyword id="KW-0963">Cytoplasm</keyword>
<keyword id="KW-0251">Elongation factor</keyword>
<keyword id="KW-0648">Protein biosynthesis</keyword>
<accession>B5Z0E9</accession>
<protein>
    <recommendedName>
        <fullName evidence="1">Elongation factor Ts</fullName>
        <shortName evidence="1">EF-Ts</shortName>
    </recommendedName>
</protein>